<reference key="1">
    <citation type="journal article" date="2009" name="PLoS Genet.">
        <title>Organised genome dynamics in the Escherichia coli species results in highly diverse adaptive paths.</title>
        <authorList>
            <person name="Touchon M."/>
            <person name="Hoede C."/>
            <person name="Tenaillon O."/>
            <person name="Barbe V."/>
            <person name="Baeriswyl S."/>
            <person name="Bidet P."/>
            <person name="Bingen E."/>
            <person name="Bonacorsi S."/>
            <person name="Bouchier C."/>
            <person name="Bouvet O."/>
            <person name="Calteau A."/>
            <person name="Chiapello H."/>
            <person name="Clermont O."/>
            <person name="Cruveiller S."/>
            <person name="Danchin A."/>
            <person name="Diard M."/>
            <person name="Dossat C."/>
            <person name="Karoui M.E."/>
            <person name="Frapy E."/>
            <person name="Garry L."/>
            <person name="Ghigo J.M."/>
            <person name="Gilles A.M."/>
            <person name="Johnson J."/>
            <person name="Le Bouguenec C."/>
            <person name="Lescat M."/>
            <person name="Mangenot S."/>
            <person name="Martinez-Jehanne V."/>
            <person name="Matic I."/>
            <person name="Nassif X."/>
            <person name="Oztas S."/>
            <person name="Petit M.A."/>
            <person name="Pichon C."/>
            <person name="Rouy Z."/>
            <person name="Ruf C.S."/>
            <person name="Schneider D."/>
            <person name="Tourret J."/>
            <person name="Vacherie B."/>
            <person name="Vallenet D."/>
            <person name="Medigue C."/>
            <person name="Rocha E.P.C."/>
            <person name="Denamur E."/>
        </authorList>
    </citation>
    <scope>NUCLEOTIDE SEQUENCE [LARGE SCALE GENOMIC DNA]</scope>
    <source>
        <strain>IAI39 / ExPEC</strain>
    </source>
</reference>
<feature type="chain" id="PRO_1000201185" description="3-hydroxydecanoyl-[acyl-carrier-protein] dehydratase">
    <location>
        <begin position="1"/>
        <end position="172"/>
    </location>
</feature>
<feature type="active site" evidence="1">
    <location>
        <position position="71"/>
    </location>
</feature>
<gene>
    <name evidence="1" type="primary">fabA</name>
    <name type="ordered locus">ECIAI39_2193</name>
</gene>
<name>FABA_ECO7I</name>
<proteinExistence type="inferred from homology"/>
<keyword id="KW-0963">Cytoplasm</keyword>
<keyword id="KW-0275">Fatty acid biosynthesis</keyword>
<keyword id="KW-0276">Fatty acid metabolism</keyword>
<keyword id="KW-0413">Isomerase</keyword>
<keyword id="KW-0444">Lipid biosynthesis</keyword>
<keyword id="KW-0443">Lipid metabolism</keyword>
<keyword id="KW-0456">Lyase</keyword>
<protein>
    <recommendedName>
        <fullName evidence="1">3-hydroxydecanoyl-[acyl-carrier-protein] dehydratase</fullName>
        <ecNumber evidence="1">4.2.1.59</ecNumber>
    </recommendedName>
    <alternativeName>
        <fullName evidence="1">3-hydroxyacyl-[acyl-carrier-protein] dehydratase FabA</fullName>
    </alternativeName>
    <alternativeName>
        <fullName evidence="1">Beta-hydroxydecanoyl thioester dehydrase</fullName>
    </alternativeName>
    <alternativeName>
        <fullName evidence="1">Trans-2-decenoyl-[acyl-carrier-protein] isomerase</fullName>
        <ecNumber evidence="1">5.3.3.14</ecNumber>
    </alternativeName>
</protein>
<evidence type="ECO:0000255" key="1">
    <source>
        <dbReference type="HAMAP-Rule" id="MF_00405"/>
    </source>
</evidence>
<organism>
    <name type="scientific">Escherichia coli O7:K1 (strain IAI39 / ExPEC)</name>
    <dbReference type="NCBI Taxonomy" id="585057"/>
    <lineage>
        <taxon>Bacteria</taxon>
        <taxon>Pseudomonadati</taxon>
        <taxon>Pseudomonadota</taxon>
        <taxon>Gammaproteobacteria</taxon>
        <taxon>Enterobacterales</taxon>
        <taxon>Enterobacteriaceae</taxon>
        <taxon>Escherichia</taxon>
    </lineage>
</organism>
<sequence length="172" mass="18969">MVDKRESYTKEDLLASGRGELFGAKGPQLPAPNMLMMDRVVKMTETGGNFDKGYVEAELDINPDLWFFGCHFIGDPVMPGCLGLDAMWQLVGFYLGWLGGEGKGRALGVGEVKFTGQVLPTAKKVTYRIHFKRIVNRRLIMGLADGEVLVDGRLIYTASDLKVGLFQDTSAF</sequence>
<comment type="function">
    <text evidence="1">Necessary for the introduction of cis unsaturation into fatty acids. Catalyzes the dehydration of (3R)-3-hydroxydecanoyl-ACP to E-(2)-decenoyl-ACP and then its isomerization to Z-(3)-decenoyl-ACP. Can catalyze the dehydratase reaction for beta-hydroxyacyl-ACPs with saturated chain lengths up to 16:0, being most active on intermediate chain length.</text>
</comment>
<comment type="catalytic activity">
    <reaction evidence="1">
        <text>a (3R)-hydroxyacyl-[ACP] = a (2E)-enoyl-[ACP] + H2O</text>
        <dbReference type="Rhea" id="RHEA:13097"/>
        <dbReference type="Rhea" id="RHEA-COMP:9925"/>
        <dbReference type="Rhea" id="RHEA-COMP:9945"/>
        <dbReference type="ChEBI" id="CHEBI:15377"/>
        <dbReference type="ChEBI" id="CHEBI:78784"/>
        <dbReference type="ChEBI" id="CHEBI:78827"/>
        <dbReference type="EC" id="4.2.1.59"/>
    </reaction>
</comment>
<comment type="catalytic activity">
    <reaction evidence="1">
        <text>(3R)-hydroxydecanoyl-[ACP] = (2E)-decenoyl-[ACP] + H2O</text>
        <dbReference type="Rhea" id="RHEA:41860"/>
        <dbReference type="Rhea" id="RHEA-COMP:9638"/>
        <dbReference type="Rhea" id="RHEA-COMP:9639"/>
        <dbReference type="ChEBI" id="CHEBI:15377"/>
        <dbReference type="ChEBI" id="CHEBI:78466"/>
        <dbReference type="ChEBI" id="CHEBI:78467"/>
    </reaction>
</comment>
<comment type="catalytic activity">
    <reaction evidence="1">
        <text>(2E)-decenoyl-[ACP] = (3Z)-decenoyl-[ACP]</text>
        <dbReference type="Rhea" id="RHEA:23568"/>
        <dbReference type="Rhea" id="RHEA-COMP:9639"/>
        <dbReference type="Rhea" id="RHEA-COMP:9927"/>
        <dbReference type="ChEBI" id="CHEBI:78467"/>
        <dbReference type="ChEBI" id="CHEBI:78798"/>
        <dbReference type="EC" id="5.3.3.14"/>
    </reaction>
</comment>
<comment type="pathway">
    <text evidence="1">Lipid metabolism; fatty acid biosynthesis.</text>
</comment>
<comment type="subunit">
    <text evidence="1">Homodimer.</text>
</comment>
<comment type="subcellular location">
    <subcellularLocation>
        <location evidence="1">Cytoplasm</location>
    </subcellularLocation>
</comment>
<comment type="similarity">
    <text evidence="1">Belongs to the thioester dehydratase family. FabA subfamily.</text>
</comment>
<dbReference type="EC" id="4.2.1.59" evidence="1"/>
<dbReference type="EC" id="5.3.3.14" evidence="1"/>
<dbReference type="EMBL" id="CU928164">
    <property type="protein sequence ID" value="CAR18320.1"/>
    <property type="molecule type" value="Genomic_DNA"/>
</dbReference>
<dbReference type="RefSeq" id="WP_000227927.1">
    <property type="nucleotide sequence ID" value="NC_011750.1"/>
</dbReference>
<dbReference type="RefSeq" id="YP_002408156.1">
    <property type="nucleotide sequence ID" value="NC_011750.1"/>
</dbReference>
<dbReference type="SMR" id="B7NM20"/>
<dbReference type="STRING" id="585057.ECIAI39_2193"/>
<dbReference type="GeneID" id="93776460"/>
<dbReference type="KEGG" id="ect:ECIAI39_2193"/>
<dbReference type="PATRIC" id="fig|585057.6.peg.2284"/>
<dbReference type="HOGENOM" id="CLU_097925_0_0_6"/>
<dbReference type="UniPathway" id="UPA00094"/>
<dbReference type="Proteomes" id="UP000000749">
    <property type="component" value="Chromosome"/>
</dbReference>
<dbReference type="GO" id="GO:0005737">
    <property type="term" value="C:cytoplasm"/>
    <property type="evidence" value="ECO:0007669"/>
    <property type="project" value="UniProtKB-SubCell"/>
</dbReference>
<dbReference type="GO" id="GO:0019171">
    <property type="term" value="F:(3R)-hydroxyacyl-[acyl-carrier-protein] dehydratase activity"/>
    <property type="evidence" value="ECO:0007669"/>
    <property type="project" value="UniProtKB-UniRule"/>
</dbReference>
<dbReference type="GO" id="GO:0034017">
    <property type="term" value="F:trans-2-decenoyl-acyl-carrier-protein isomerase activity"/>
    <property type="evidence" value="ECO:0007669"/>
    <property type="project" value="UniProtKB-UniRule"/>
</dbReference>
<dbReference type="GO" id="GO:0006636">
    <property type="term" value="P:unsaturated fatty acid biosynthetic process"/>
    <property type="evidence" value="ECO:0007669"/>
    <property type="project" value="UniProtKB-UniRule"/>
</dbReference>
<dbReference type="CDD" id="cd01287">
    <property type="entry name" value="FabA"/>
    <property type="match status" value="1"/>
</dbReference>
<dbReference type="FunFam" id="3.10.129.10:FF:000003">
    <property type="entry name" value="3-hydroxydecanoyl-[acyl-carrier-protein] dehydratase"/>
    <property type="match status" value="1"/>
</dbReference>
<dbReference type="Gene3D" id="3.10.129.10">
    <property type="entry name" value="Hotdog Thioesterase"/>
    <property type="match status" value="1"/>
</dbReference>
<dbReference type="HAMAP" id="MF_00405">
    <property type="entry name" value="FabA"/>
    <property type="match status" value="1"/>
</dbReference>
<dbReference type="InterPro" id="IPR010083">
    <property type="entry name" value="FabA"/>
</dbReference>
<dbReference type="InterPro" id="IPR013114">
    <property type="entry name" value="FabA_FabZ"/>
</dbReference>
<dbReference type="InterPro" id="IPR029069">
    <property type="entry name" value="HotDog_dom_sf"/>
</dbReference>
<dbReference type="NCBIfam" id="TIGR01749">
    <property type="entry name" value="fabA"/>
    <property type="match status" value="1"/>
</dbReference>
<dbReference type="NCBIfam" id="NF003509">
    <property type="entry name" value="PRK05174.1"/>
    <property type="match status" value="1"/>
</dbReference>
<dbReference type="PANTHER" id="PTHR30272">
    <property type="entry name" value="3-HYDROXYACYL-[ACYL-CARRIER-PROTEIN] DEHYDRATASE"/>
    <property type="match status" value="1"/>
</dbReference>
<dbReference type="PANTHER" id="PTHR30272:SF8">
    <property type="entry name" value="3-HYDROXYDECANOYL-[ACYL-CARRIER-PROTEIN] DEHYDRATASE"/>
    <property type="match status" value="1"/>
</dbReference>
<dbReference type="Pfam" id="PF07977">
    <property type="entry name" value="FabA"/>
    <property type="match status" value="1"/>
</dbReference>
<dbReference type="SUPFAM" id="SSF54637">
    <property type="entry name" value="Thioesterase/thiol ester dehydrase-isomerase"/>
    <property type="match status" value="1"/>
</dbReference>
<accession>B7NM20</accession>